<gene>
    <name evidence="1" type="primary">atpH</name>
    <name type="ordered locus">BAbS19_I16910</name>
</gene>
<organism>
    <name type="scientific">Brucella abortus (strain S19)</name>
    <dbReference type="NCBI Taxonomy" id="430066"/>
    <lineage>
        <taxon>Bacteria</taxon>
        <taxon>Pseudomonadati</taxon>
        <taxon>Pseudomonadota</taxon>
        <taxon>Alphaproteobacteria</taxon>
        <taxon>Hyphomicrobiales</taxon>
        <taxon>Brucellaceae</taxon>
        <taxon>Brucella/Ochrobactrum group</taxon>
        <taxon>Brucella</taxon>
    </lineage>
</organism>
<feature type="chain" id="PRO_0000370910" description="ATP synthase subunit delta">
    <location>
        <begin position="1"/>
        <end position="186"/>
    </location>
</feature>
<proteinExistence type="inferred from homology"/>
<dbReference type="EMBL" id="CP000887">
    <property type="protein sequence ID" value="ACD73173.1"/>
    <property type="molecule type" value="Genomic_DNA"/>
</dbReference>
<dbReference type="RefSeq" id="WP_002964879.1">
    <property type="nucleotide sequence ID" value="NC_010742.1"/>
</dbReference>
<dbReference type="SMR" id="B2S7M6"/>
<dbReference type="KEGG" id="bmc:BAbS19_I16910"/>
<dbReference type="HOGENOM" id="CLU_085114_0_1_5"/>
<dbReference type="Proteomes" id="UP000002565">
    <property type="component" value="Chromosome 1"/>
</dbReference>
<dbReference type="GO" id="GO:0005886">
    <property type="term" value="C:plasma membrane"/>
    <property type="evidence" value="ECO:0007669"/>
    <property type="project" value="UniProtKB-SubCell"/>
</dbReference>
<dbReference type="GO" id="GO:0045259">
    <property type="term" value="C:proton-transporting ATP synthase complex"/>
    <property type="evidence" value="ECO:0007669"/>
    <property type="project" value="UniProtKB-KW"/>
</dbReference>
<dbReference type="GO" id="GO:0046933">
    <property type="term" value="F:proton-transporting ATP synthase activity, rotational mechanism"/>
    <property type="evidence" value="ECO:0007669"/>
    <property type="project" value="UniProtKB-UniRule"/>
</dbReference>
<dbReference type="Gene3D" id="1.10.520.20">
    <property type="entry name" value="N-terminal domain of the delta subunit of the F1F0-ATP synthase"/>
    <property type="match status" value="1"/>
</dbReference>
<dbReference type="HAMAP" id="MF_01416">
    <property type="entry name" value="ATP_synth_delta_bact"/>
    <property type="match status" value="1"/>
</dbReference>
<dbReference type="InterPro" id="IPR026015">
    <property type="entry name" value="ATP_synth_OSCP/delta_N_sf"/>
</dbReference>
<dbReference type="InterPro" id="IPR020781">
    <property type="entry name" value="ATPase_OSCP/d_CS"/>
</dbReference>
<dbReference type="InterPro" id="IPR000711">
    <property type="entry name" value="ATPase_OSCP/dsu"/>
</dbReference>
<dbReference type="NCBIfam" id="TIGR01145">
    <property type="entry name" value="ATP_synt_delta"/>
    <property type="match status" value="1"/>
</dbReference>
<dbReference type="NCBIfam" id="NF004402">
    <property type="entry name" value="PRK05758.2-2"/>
    <property type="match status" value="1"/>
</dbReference>
<dbReference type="NCBIfam" id="NF004406">
    <property type="entry name" value="PRK05758.3-2"/>
    <property type="match status" value="1"/>
</dbReference>
<dbReference type="PANTHER" id="PTHR11910">
    <property type="entry name" value="ATP SYNTHASE DELTA CHAIN"/>
    <property type="match status" value="1"/>
</dbReference>
<dbReference type="Pfam" id="PF00213">
    <property type="entry name" value="OSCP"/>
    <property type="match status" value="1"/>
</dbReference>
<dbReference type="PRINTS" id="PR00125">
    <property type="entry name" value="ATPASEDELTA"/>
</dbReference>
<dbReference type="SUPFAM" id="SSF47928">
    <property type="entry name" value="N-terminal domain of the delta subunit of the F1F0-ATP synthase"/>
    <property type="match status" value="1"/>
</dbReference>
<dbReference type="PROSITE" id="PS00389">
    <property type="entry name" value="ATPASE_DELTA"/>
    <property type="match status" value="1"/>
</dbReference>
<keyword id="KW-0066">ATP synthesis</keyword>
<keyword id="KW-0997">Cell inner membrane</keyword>
<keyword id="KW-1003">Cell membrane</keyword>
<keyword id="KW-0139">CF(1)</keyword>
<keyword id="KW-0375">Hydrogen ion transport</keyword>
<keyword id="KW-0406">Ion transport</keyword>
<keyword id="KW-0472">Membrane</keyword>
<keyword id="KW-0813">Transport</keyword>
<protein>
    <recommendedName>
        <fullName evidence="1">ATP synthase subunit delta</fullName>
    </recommendedName>
    <alternativeName>
        <fullName evidence="1">ATP synthase F(1) sector subunit delta</fullName>
    </alternativeName>
    <alternativeName>
        <fullName evidence="1">F-type ATPase subunit delta</fullName>
        <shortName evidence="1">F-ATPase subunit delta</shortName>
    </alternativeName>
</protein>
<reference key="1">
    <citation type="journal article" date="2008" name="PLoS ONE">
        <title>Genome sequence of Brucella abortus vaccine strain S19 compared to virulent strains yields candidate virulence genes.</title>
        <authorList>
            <person name="Crasta O.R."/>
            <person name="Folkerts O."/>
            <person name="Fei Z."/>
            <person name="Mane S.P."/>
            <person name="Evans C."/>
            <person name="Martino-Catt S."/>
            <person name="Bricker B."/>
            <person name="Yu G."/>
            <person name="Du L."/>
            <person name="Sobral B.W."/>
        </authorList>
    </citation>
    <scope>NUCLEOTIDE SEQUENCE [LARGE SCALE GENOMIC DNA]</scope>
    <source>
        <strain>S19</strain>
    </source>
</reference>
<comment type="function">
    <text evidence="1">F(1)F(0) ATP synthase produces ATP from ADP in the presence of a proton or sodium gradient. F-type ATPases consist of two structural domains, F(1) containing the extramembraneous catalytic core and F(0) containing the membrane proton channel, linked together by a central stalk and a peripheral stalk. During catalysis, ATP synthesis in the catalytic domain of F(1) is coupled via a rotary mechanism of the central stalk subunits to proton translocation.</text>
</comment>
<comment type="function">
    <text evidence="1">This protein is part of the stalk that links CF(0) to CF(1). It either transmits conformational changes from CF(0) to CF(1) or is implicated in proton conduction.</text>
</comment>
<comment type="subunit">
    <text evidence="1">F-type ATPases have 2 components, F(1) - the catalytic core - and F(0) - the membrane proton channel. F(1) has five subunits: alpha(3), beta(3), gamma(1), delta(1), epsilon(1). F(0) has three main subunits: a(1), b(2) and c(10-14). The alpha and beta chains form an alternating ring which encloses part of the gamma chain. F(1) is attached to F(0) by a central stalk formed by the gamma and epsilon chains, while a peripheral stalk is formed by the delta and b chains.</text>
</comment>
<comment type="subcellular location">
    <subcellularLocation>
        <location evidence="1">Cell inner membrane</location>
        <topology evidence="1">Peripheral membrane protein</topology>
    </subcellularLocation>
</comment>
<comment type="similarity">
    <text evidence="1">Belongs to the ATPase delta chain family.</text>
</comment>
<sequence>MAETSSLISGVAQRYAGSLFEHALDANSVASVEKDLGRFEALLSGSEDLRRLISSPVFSSEDQLHAIGAIADKAGIKGLVGNFLRVVAQNRRLFALPGIIAAFRQIAAEHRGEISADVVSAHELTSAQQNELKATLKGVAGKDVTINVTVDPSILGGLIVKMGSRQIDTSLRTKLSSLKLALKEVG</sequence>
<accession>B2S7M6</accession>
<name>ATPD_BRUA1</name>
<evidence type="ECO:0000255" key="1">
    <source>
        <dbReference type="HAMAP-Rule" id="MF_01416"/>
    </source>
</evidence>